<keyword id="KW-0520">NAD</keyword>
<keyword id="KW-0560">Oxidoreductase</keyword>
<keyword id="KW-1185">Reference proteome</keyword>
<evidence type="ECO:0000255" key="1">
    <source>
        <dbReference type="HAMAP-Rule" id="MF_00196"/>
    </source>
</evidence>
<name>MTLD_ACTP2</name>
<sequence length="379" mass="41648">MNALHFGAGNIGRGFIGKLLADSGVFVTFADINQTQIDQINQNKQYGVKIVGDASRVEVVKNIAAINSKDEEAVIEQVKSVELITTAVGPNVLGFIAPLFAKALAARLEAGNTQPLNIIACENMVRGTSFFKAKIFENLTDSQQAEIEKFVGFVDSAVDRIVPPAELNEADPLEVTVEEFSEWIVDKTQFKGQIPDIKGMELTDNLMAFVERKLFTLNTGHLISAYLGKQAGVKWIKEAIAIDSVKAAVKATMEESGAVLIKRYNFDPQAHAAYIEKILKRFANPYLNDDVNRVGREPIRKLSPNDRLIKPLLGTLEYGLPHKNLVNGVVMALQYRNEEDPQAVELAQFIADNGVAAAVEKYTGLTNQEVIDQVVALYN</sequence>
<gene>
    <name evidence="1" type="primary">mtlD</name>
    <name type="ordered locus">APL_1629</name>
</gene>
<feature type="chain" id="PRO_1000011790" description="Mannitol-1-phosphate 5-dehydrogenase">
    <location>
        <begin position="1"/>
        <end position="379"/>
    </location>
</feature>
<feature type="binding site" evidence="1">
    <location>
        <begin position="3"/>
        <end position="14"/>
    </location>
    <ligand>
        <name>NAD(+)</name>
        <dbReference type="ChEBI" id="CHEBI:57540"/>
    </ligand>
</feature>
<dbReference type="EC" id="1.1.1.17" evidence="1"/>
<dbReference type="EMBL" id="CP000569">
    <property type="protein sequence ID" value="ABN74713.1"/>
    <property type="molecule type" value="Genomic_DNA"/>
</dbReference>
<dbReference type="RefSeq" id="WP_005605615.1">
    <property type="nucleotide sequence ID" value="NC_009053.1"/>
</dbReference>
<dbReference type="SMR" id="A3N2S7"/>
<dbReference type="STRING" id="416269.APL_1629"/>
<dbReference type="EnsemblBacteria" id="ABN74713">
    <property type="protein sequence ID" value="ABN74713"/>
    <property type="gene ID" value="APL_1629"/>
</dbReference>
<dbReference type="KEGG" id="apl:APL_1629"/>
<dbReference type="eggNOG" id="COG0246">
    <property type="taxonomic scope" value="Bacteria"/>
</dbReference>
<dbReference type="HOGENOM" id="CLU_036089_2_0_6"/>
<dbReference type="Proteomes" id="UP000001432">
    <property type="component" value="Chromosome"/>
</dbReference>
<dbReference type="GO" id="GO:0005829">
    <property type="term" value="C:cytosol"/>
    <property type="evidence" value="ECO:0007669"/>
    <property type="project" value="TreeGrafter"/>
</dbReference>
<dbReference type="GO" id="GO:0008926">
    <property type="term" value="F:mannitol-1-phosphate 5-dehydrogenase activity"/>
    <property type="evidence" value="ECO:0007669"/>
    <property type="project" value="UniProtKB-UniRule"/>
</dbReference>
<dbReference type="GO" id="GO:0019592">
    <property type="term" value="P:mannitol catabolic process"/>
    <property type="evidence" value="ECO:0007669"/>
    <property type="project" value="TreeGrafter"/>
</dbReference>
<dbReference type="FunFam" id="1.10.1040.10:FF:000009">
    <property type="entry name" value="Mannitol-1-phosphate 5-dehydrogenase"/>
    <property type="match status" value="1"/>
</dbReference>
<dbReference type="FunFam" id="3.40.50.720:FF:000075">
    <property type="entry name" value="Mannitol-1-phosphate 5-dehydrogenase"/>
    <property type="match status" value="1"/>
</dbReference>
<dbReference type="Gene3D" id="1.10.1040.10">
    <property type="entry name" value="N-(1-d-carboxylethyl)-l-norvaline Dehydrogenase, domain 2"/>
    <property type="match status" value="1"/>
</dbReference>
<dbReference type="Gene3D" id="3.40.50.720">
    <property type="entry name" value="NAD(P)-binding Rossmann-like Domain"/>
    <property type="match status" value="1"/>
</dbReference>
<dbReference type="HAMAP" id="MF_00196">
    <property type="entry name" value="Mannitol_dehydrog"/>
    <property type="match status" value="1"/>
</dbReference>
<dbReference type="InterPro" id="IPR008927">
    <property type="entry name" value="6-PGluconate_DH-like_C_sf"/>
</dbReference>
<dbReference type="InterPro" id="IPR013328">
    <property type="entry name" value="6PGD_dom2"/>
</dbReference>
<dbReference type="InterPro" id="IPR023028">
    <property type="entry name" value="Mannitol_1_phos_5_DH"/>
</dbReference>
<dbReference type="InterPro" id="IPR000669">
    <property type="entry name" value="Mannitol_DH"/>
</dbReference>
<dbReference type="InterPro" id="IPR013118">
    <property type="entry name" value="Mannitol_DH_C"/>
</dbReference>
<dbReference type="InterPro" id="IPR023027">
    <property type="entry name" value="Mannitol_DH_CS"/>
</dbReference>
<dbReference type="InterPro" id="IPR013131">
    <property type="entry name" value="Mannitol_DH_N"/>
</dbReference>
<dbReference type="InterPro" id="IPR036291">
    <property type="entry name" value="NAD(P)-bd_dom_sf"/>
</dbReference>
<dbReference type="NCBIfam" id="NF002646">
    <property type="entry name" value="PRK02318.1-2"/>
    <property type="match status" value="1"/>
</dbReference>
<dbReference type="NCBIfam" id="NF002647">
    <property type="entry name" value="PRK02318.1-3"/>
    <property type="match status" value="1"/>
</dbReference>
<dbReference type="NCBIfam" id="NF002650">
    <property type="entry name" value="PRK02318.2-2"/>
    <property type="match status" value="1"/>
</dbReference>
<dbReference type="NCBIfam" id="NF002652">
    <property type="entry name" value="PRK02318.2-5"/>
    <property type="match status" value="1"/>
</dbReference>
<dbReference type="PANTHER" id="PTHR30524:SF0">
    <property type="entry name" value="ALTRONATE OXIDOREDUCTASE-RELATED"/>
    <property type="match status" value="1"/>
</dbReference>
<dbReference type="PANTHER" id="PTHR30524">
    <property type="entry name" value="MANNITOL-1-PHOSPHATE 5-DEHYDROGENASE"/>
    <property type="match status" value="1"/>
</dbReference>
<dbReference type="Pfam" id="PF01232">
    <property type="entry name" value="Mannitol_dh"/>
    <property type="match status" value="1"/>
</dbReference>
<dbReference type="Pfam" id="PF08125">
    <property type="entry name" value="Mannitol_dh_C"/>
    <property type="match status" value="1"/>
</dbReference>
<dbReference type="PRINTS" id="PR00084">
    <property type="entry name" value="MTLDHDRGNASE"/>
</dbReference>
<dbReference type="SUPFAM" id="SSF48179">
    <property type="entry name" value="6-phosphogluconate dehydrogenase C-terminal domain-like"/>
    <property type="match status" value="1"/>
</dbReference>
<dbReference type="SUPFAM" id="SSF51735">
    <property type="entry name" value="NAD(P)-binding Rossmann-fold domains"/>
    <property type="match status" value="1"/>
</dbReference>
<dbReference type="PROSITE" id="PS00974">
    <property type="entry name" value="MANNITOL_DHGENASE"/>
    <property type="match status" value="1"/>
</dbReference>
<proteinExistence type="inferred from homology"/>
<comment type="catalytic activity">
    <reaction evidence="1">
        <text>D-mannitol 1-phosphate + NAD(+) = beta-D-fructose 6-phosphate + NADH + H(+)</text>
        <dbReference type="Rhea" id="RHEA:19661"/>
        <dbReference type="ChEBI" id="CHEBI:15378"/>
        <dbReference type="ChEBI" id="CHEBI:57540"/>
        <dbReference type="ChEBI" id="CHEBI:57634"/>
        <dbReference type="ChEBI" id="CHEBI:57945"/>
        <dbReference type="ChEBI" id="CHEBI:61381"/>
        <dbReference type="EC" id="1.1.1.17"/>
    </reaction>
</comment>
<comment type="similarity">
    <text evidence="1">Belongs to the mannitol dehydrogenase family.</text>
</comment>
<accession>A3N2S7</accession>
<protein>
    <recommendedName>
        <fullName evidence="1">Mannitol-1-phosphate 5-dehydrogenase</fullName>
        <ecNumber evidence="1">1.1.1.17</ecNumber>
    </recommendedName>
</protein>
<reference key="1">
    <citation type="journal article" date="2008" name="J. Bacteriol.">
        <title>The complete genome sequence of Actinobacillus pleuropneumoniae L20 (serotype 5b).</title>
        <authorList>
            <person name="Foote S.J."/>
            <person name="Bosse J.T."/>
            <person name="Bouevitch A.B."/>
            <person name="Langford P.R."/>
            <person name="Young N.M."/>
            <person name="Nash J.H.E."/>
        </authorList>
    </citation>
    <scope>NUCLEOTIDE SEQUENCE [LARGE SCALE GENOMIC DNA]</scope>
    <source>
        <strain>L20</strain>
    </source>
</reference>
<organism>
    <name type="scientific">Actinobacillus pleuropneumoniae serotype 5b (strain L20)</name>
    <dbReference type="NCBI Taxonomy" id="416269"/>
    <lineage>
        <taxon>Bacteria</taxon>
        <taxon>Pseudomonadati</taxon>
        <taxon>Pseudomonadota</taxon>
        <taxon>Gammaproteobacteria</taxon>
        <taxon>Pasteurellales</taxon>
        <taxon>Pasteurellaceae</taxon>
        <taxon>Actinobacillus</taxon>
    </lineage>
</organism>